<gene>
    <name evidence="1" type="primary">fluC2</name>
    <name evidence="1" type="synonym">crcB2</name>
    <name type="ordered locus">SYNW0098</name>
</gene>
<accession>Q7UA04</accession>
<evidence type="ECO:0000255" key="1">
    <source>
        <dbReference type="HAMAP-Rule" id="MF_00454"/>
    </source>
</evidence>
<proteinExistence type="inferred from homology"/>
<feature type="chain" id="PRO_0000110201" description="Fluoride-specific ion channel FluC 2">
    <location>
        <begin position="1"/>
        <end position="132"/>
    </location>
</feature>
<feature type="transmembrane region" description="Helical" evidence="1">
    <location>
        <begin position="12"/>
        <end position="32"/>
    </location>
</feature>
<feature type="transmembrane region" description="Helical" evidence="1">
    <location>
        <begin position="41"/>
        <end position="61"/>
    </location>
</feature>
<feature type="transmembrane region" description="Helical" evidence="1">
    <location>
        <begin position="65"/>
        <end position="85"/>
    </location>
</feature>
<feature type="transmembrane region" description="Helical" evidence="1">
    <location>
        <begin position="96"/>
        <end position="116"/>
    </location>
</feature>
<feature type="binding site" evidence="1">
    <location>
        <position position="73"/>
    </location>
    <ligand>
        <name>Na(+)</name>
        <dbReference type="ChEBI" id="CHEBI:29101"/>
        <note>structural</note>
    </ligand>
</feature>
<feature type="binding site" evidence="1">
    <location>
        <position position="76"/>
    </location>
    <ligand>
        <name>Na(+)</name>
        <dbReference type="ChEBI" id="CHEBI:29101"/>
        <note>structural</note>
    </ligand>
</feature>
<dbReference type="EMBL" id="BX569689">
    <property type="protein sequence ID" value="CAE06613.1"/>
    <property type="molecule type" value="Genomic_DNA"/>
</dbReference>
<dbReference type="RefSeq" id="WP_011126976.1">
    <property type="nucleotide sequence ID" value="NC_005070.1"/>
</dbReference>
<dbReference type="SMR" id="Q7UA04"/>
<dbReference type="STRING" id="84588.SYNW0098"/>
<dbReference type="KEGG" id="syw:SYNW0098"/>
<dbReference type="eggNOG" id="COG0239">
    <property type="taxonomic scope" value="Bacteria"/>
</dbReference>
<dbReference type="HOGENOM" id="CLU_114342_2_1_3"/>
<dbReference type="Proteomes" id="UP000001422">
    <property type="component" value="Chromosome"/>
</dbReference>
<dbReference type="GO" id="GO:0005886">
    <property type="term" value="C:plasma membrane"/>
    <property type="evidence" value="ECO:0007669"/>
    <property type="project" value="UniProtKB-SubCell"/>
</dbReference>
<dbReference type="GO" id="GO:0062054">
    <property type="term" value="F:fluoride channel activity"/>
    <property type="evidence" value="ECO:0007669"/>
    <property type="project" value="UniProtKB-UniRule"/>
</dbReference>
<dbReference type="GO" id="GO:0046872">
    <property type="term" value="F:metal ion binding"/>
    <property type="evidence" value="ECO:0007669"/>
    <property type="project" value="UniProtKB-KW"/>
</dbReference>
<dbReference type="GO" id="GO:0140114">
    <property type="term" value="P:cellular detoxification of fluoride"/>
    <property type="evidence" value="ECO:0007669"/>
    <property type="project" value="UniProtKB-UniRule"/>
</dbReference>
<dbReference type="HAMAP" id="MF_00454">
    <property type="entry name" value="FluC"/>
    <property type="match status" value="1"/>
</dbReference>
<dbReference type="InterPro" id="IPR003691">
    <property type="entry name" value="FluC"/>
</dbReference>
<dbReference type="PANTHER" id="PTHR28259">
    <property type="entry name" value="FLUORIDE EXPORT PROTEIN 1-RELATED"/>
    <property type="match status" value="1"/>
</dbReference>
<dbReference type="PANTHER" id="PTHR28259:SF1">
    <property type="entry name" value="FLUORIDE EXPORT PROTEIN 1-RELATED"/>
    <property type="match status" value="1"/>
</dbReference>
<dbReference type="Pfam" id="PF02537">
    <property type="entry name" value="CRCB"/>
    <property type="match status" value="1"/>
</dbReference>
<keyword id="KW-0997">Cell inner membrane</keyword>
<keyword id="KW-1003">Cell membrane</keyword>
<keyword id="KW-0407">Ion channel</keyword>
<keyword id="KW-0406">Ion transport</keyword>
<keyword id="KW-0472">Membrane</keyword>
<keyword id="KW-0479">Metal-binding</keyword>
<keyword id="KW-0915">Sodium</keyword>
<keyword id="KW-0812">Transmembrane</keyword>
<keyword id="KW-1133">Transmembrane helix</keyword>
<keyword id="KW-0813">Transport</keyword>
<protein>
    <recommendedName>
        <fullName evidence="1">Fluoride-specific ion channel FluC 2</fullName>
    </recommendedName>
</protein>
<name>FLUC2_PARMW</name>
<comment type="function">
    <text evidence="1">Fluoride-specific ion channel. Important for reducing fluoride concentration in the cell, thus reducing its toxicity.</text>
</comment>
<comment type="catalytic activity">
    <reaction evidence="1">
        <text>fluoride(in) = fluoride(out)</text>
        <dbReference type="Rhea" id="RHEA:76159"/>
        <dbReference type="ChEBI" id="CHEBI:17051"/>
    </reaction>
    <physiologicalReaction direction="left-to-right" evidence="1">
        <dbReference type="Rhea" id="RHEA:76160"/>
    </physiologicalReaction>
</comment>
<comment type="activity regulation">
    <text evidence="1">Na(+) is not transported, but it plays an essential structural role and its presence is essential for fluoride channel function.</text>
</comment>
<comment type="subcellular location">
    <subcellularLocation>
        <location evidence="1">Cell inner membrane</location>
        <topology evidence="1">Multi-pass membrane protein</topology>
    </subcellularLocation>
</comment>
<comment type="similarity">
    <text evidence="1">Belongs to the fluoride channel Fluc/FEX (TC 1.A.43) family.</text>
</comment>
<sequence length="132" mass="13840">MAEQFSMLRSELTELLLVAVGAVPGALLRWQLAHHLGDQNLLVNVLGAALLGLLAGRPVAPRRQLLVGIGFCGSLTTFSSWMLAAMKHVSAGDWPAALGLIGLTLGLGLGAAALGFSLGRRLRPPEQPRSEP</sequence>
<organism>
    <name type="scientific">Parasynechococcus marenigrum (strain WH8102)</name>
    <dbReference type="NCBI Taxonomy" id="84588"/>
    <lineage>
        <taxon>Bacteria</taxon>
        <taxon>Bacillati</taxon>
        <taxon>Cyanobacteriota</taxon>
        <taxon>Cyanophyceae</taxon>
        <taxon>Synechococcales</taxon>
        <taxon>Prochlorococcaceae</taxon>
        <taxon>Parasynechococcus</taxon>
        <taxon>Parasynechococcus marenigrum</taxon>
    </lineage>
</organism>
<reference key="1">
    <citation type="journal article" date="2003" name="Nature">
        <title>The genome of a motile marine Synechococcus.</title>
        <authorList>
            <person name="Palenik B."/>
            <person name="Brahamsha B."/>
            <person name="Larimer F.W."/>
            <person name="Land M.L."/>
            <person name="Hauser L."/>
            <person name="Chain P."/>
            <person name="Lamerdin J.E."/>
            <person name="Regala W."/>
            <person name="Allen E.E."/>
            <person name="McCarren J."/>
            <person name="Paulsen I.T."/>
            <person name="Dufresne A."/>
            <person name="Partensky F."/>
            <person name="Webb E.A."/>
            <person name="Waterbury J."/>
        </authorList>
    </citation>
    <scope>NUCLEOTIDE SEQUENCE [LARGE SCALE GENOMIC DNA]</scope>
    <source>
        <strain>WH8102</strain>
    </source>
</reference>